<name>RK36_EUGGR</name>
<geneLocation type="chloroplast"/>
<sequence>MKIRSSVKKICNKCYLIRRKNNLLVVCINNKHKQRQG</sequence>
<accession>P21532</accession>
<dbReference type="EMBL" id="Z11874">
    <property type="protein sequence ID" value="CAA77926.1"/>
    <property type="molecule type" value="Genomic_DNA"/>
</dbReference>
<dbReference type="EMBL" id="X70810">
    <property type="protein sequence ID" value="CAA50109.1"/>
    <property type="molecule type" value="Genomic_DNA"/>
</dbReference>
<dbReference type="PIR" id="S09290">
    <property type="entry name" value="R5EG36"/>
</dbReference>
<dbReference type="RefSeq" id="NP_041922.1">
    <property type="nucleotide sequence ID" value="NC_001603.2"/>
</dbReference>
<dbReference type="SMR" id="P21532"/>
<dbReference type="GeneID" id="807512"/>
<dbReference type="GO" id="GO:0009507">
    <property type="term" value="C:chloroplast"/>
    <property type="evidence" value="ECO:0007669"/>
    <property type="project" value="UniProtKB-SubCell"/>
</dbReference>
<dbReference type="GO" id="GO:1990904">
    <property type="term" value="C:ribonucleoprotein complex"/>
    <property type="evidence" value="ECO:0007669"/>
    <property type="project" value="UniProtKB-KW"/>
</dbReference>
<dbReference type="GO" id="GO:0005840">
    <property type="term" value="C:ribosome"/>
    <property type="evidence" value="ECO:0007669"/>
    <property type="project" value="UniProtKB-KW"/>
</dbReference>
<dbReference type="GO" id="GO:0003735">
    <property type="term" value="F:structural constituent of ribosome"/>
    <property type="evidence" value="ECO:0007669"/>
    <property type="project" value="InterPro"/>
</dbReference>
<dbReference type="GO" id="GO:0006412">
    <property type="term" value="P:translation"/>
    <property type="evidence" value="ECO:0007669"/>
    <property type="project" value="UniProtKB-UniRule"/>
</dbReference>
<dbReference type="HAMAP" id="MF_00251">
    <property type="entry name" value="Ribosomal_bL36"/>
    <property type="match status" value="1"/>
</dbReference>
<dbReference type="InterPro" id="IPR000473">
    <property type="entry name" value="Ribosomal_bL36"/>
</dbReference>
<dbReference type="InterPro" id="IPR035977">
    <property type="entry name" value="Ribosomal_bL36_sp"/>
</dbReference>
<dbReference type="NCBIfam" id="TIGR01022">
    <property type="entry name" value="rpmJ_bact"/>
    <property type="match status" value="1"/>
</dbReference>
<dbReference type="PANTHER" id="PTHR42888">
    <property type="entry name" value="50S RIBOSOMAL PROTEIN L36, CHLOROPLASTIC"/>
    <property type="match status" value="1"/>
</dbReference>
<dbReference type="PANTHER" id="PTHR42888:SF1">
    <property type="entry name" value="LARGE RIBOSOMAL SUBUNIT PROTEIN BL36C"/>
    <property type="match status" value="1"/>
</dbReference>
<dbReference type="Pfam" id="PF00444">
    <property type="entry name" value="Ribosomal_L36"/>
    <property type="match status" value="1"/>
</dbReference>
<dbReference type="SUPFAM" id="SSF57840">
    <property type="entry name" value="Ribosomal protein L36"/>
    <property type="match status" value="1"/>
</dbReference>
<dbReference type="PROSITE" id="PS00828">
    <property type="entry name" value="RIBOSOMAL_L36"/>
    <property type="match status" value="1"/>
</dbReference>
<comment type="subcellular location">
    <subcellularLocation>
        <location>Plastid</location>
        <location>Chloroplast</location>
    </subcellularLocation>
</comment>
<comment type="similarity">
    <text evidence="1">Belongs to the bacterial ribosomal protein bL36 family.</text>
</comment>
<proteinExistence type="inferred from homology"/>
<keyword id="KW-0150">Chloroplast</keyword>
<keyword id="KW-0934">Plastid</keyword>
<keyword id="KW-0687">Ribonucleoprotein</keyword>
<keyword id="KW-0689">Ribosomal protein</keyword>
<protein>
    <recommendedName>
        <fullName evidence="1">Large ribosomal subunit protein bL36c</fullName>
    </recommendedName>
    <alternativeName>
        <fullName>50S ribosomal protein L36, chloroplastic</fullName>
    </alternativeName>
</protein>
<evidence type="ECO:0000305" key="1"/>
<organism>
    <name type="scientific">Euglena gracilis</name>
    <dbReference type="NCBI Taxonomy" id="3039"/>
    <lineage>
        <taxon>Eukaryota</taxon>
        <taxon>Discoba</taxon>
        <taxon>Euglenozoa</taxon>
        <taxon>Euglenida</taxon>
        <taxon>Spirocuta</taxon>
        <taxon>Euglenophyceae</taxon>
        <taxon>Euglenales</taxon>
        <taxon>Euglenaceae</taxon>
        <taxon>Euglena</taxon>
    </lineage>
</organism>
<feature type="chain" id="PRO_0000126320" description="Large ribosomal subunit protein bL36c">
    <location>
        <begin position="1"/>
        <end position="37"/>
    </location>
</feature>
<gene>
    <name type="primary">rpl36</name>
</gene>
<reference key="1">
    <citation type="journal article" date="1989" name="Nucleic Acids Res.">
        <title>Euglena gracilis chloroplast ribosomal protein operon: a new chloroplast gene for ribosomal protein L5 and description of a novel organelle intron category designated group III.</title>
        <authorList>
            <person name="Christopher D.A."/>
            <person name="Hallick R.B."/>
        </authorList>
    </citation>
    <scope>NUCLEOTIDE SEQUENCE [GENOMIC DNA]</scope>
    <source>
        <strain>Z / UTEX 753</strain>
    </source>
</reference>
<reference key="2">
    <citation type="journal article" date="1993" name="Nucleic Acids Res.">
        <title>Complete sequence of Euglena gracilis chloroplast DNA.</title>
        <authorList>
            <person name="Hallick R.B."/>
            <person name="Hong L."/>
            <person name="Drager R.G."/>
            <person name="Favreau M.R."/>
            <person name="Monfort A."/>
            <person name="Orsat B."/>
            <person name="Spielmann A."/>
            <person name="Stutz E."/>
        </authorList>
    </citation>
    <scope>NUCLEOTIDE SEQUENCE [LARGE SCALE GENOMIC DNA]</scope>
    <source>
        <strain>Z / UTEX 753</strain>
    </source>
</reference>